<name>HEM1_RHORT</name>
<feature type="chain" id="PRO_0000335067" description="Glutamyl-tRNA reductase">
    <location>
        <begin position="1"/>
        <end position="431"/>
    </location>
</feature>
<feature type="active site" description="Nucleophile" evidence="1">
    <location>
        <position position="50"/>
    </location>
</feature>
<feature type="binding site" evidence="1">
    <location>
        <begin position="49"/>
        <end position="52"/>
    </location>
    <ligand>
        <name>substrate</name>
    </ligand>
</feature>
<feature type="binding site" evidence="1">
    <location>
        <position position="109"/>
    </location>
    <ligand>
        <name>substrate</name>
    </ligand>
</feature>
<feature type="binding site" evidence="1">
    <location>
        <begin position="114"/>
        <end position="116"/>
    </location>
    <ligand>
        <name>substrate</name>
    </ligand>
</feature>
<feature type="binding site" evidence="1">
    <location>
        <position position="120"/>
    </location>
    <ligand>
        <name>substrate</name>
    </ligand>
</feature>
<feature type="binding site" evidence="1">
    <location>
        <begin position="189"/>
        <end position="194"/>
    </location>
    <ligand>
        <name>NADP(+)</name>
        <dbReference type="ChEBI" id="CHEBI:58349"/>
    </ligand>
</feature>
<feature type="site" description="Important for activity" evidence="1">
    <location>
        <position position="99"/>
    </location>
</feature>
<reference key="1">
    <citation type="journal article" date="2011" name="Stand. Genomic Sci.">
        <title>Complete genome sequence of Rhodospirillum rubrum type strain (S1).</title>
        <authorList>
            <person name="Munk A.C."/>
            <person name="Copeland A."/>
            <person name="Lucas S."/>
            <person name="Lapidus A."/>
            <person name="Del Rio T.G."/>
            <person name="Barry K."/>
            <person name="Detter J.C."/>
            <person name="Hammon N."/>
            <person name="Israni S."/>
            <person name="Pitluck S."/>
            <person name="Brettin T."/>
            <person name="Bruce D."/>
            <person name="Han C."/>
            <person name="Tapia R."/>
            <person name="Gilna P."/>
            <person name="Schmutz J."/>
            <person name="Larimer F."/>
            <person name="Land M."/>
            <person name="Kyrpides N.C."/>
            <person name="Mavromatis K."/>
            <person name="Richardson P."/>
            <person name="Rohde M."/>
            <person name="Goeker M."/>
            <person name="Klenk H.P."/>
            <person name="Zhang Y."/>
            <person name="Roberts G.P."/>
            <person name="Reslewic S."/>
            <person name="Schwartz D.C."/>
        </authorList>
    </citation>
    <scope>NUCLEOTIDE SEQUENCE [LARGE SCALE GENOMIC DNA]</scope>
    <source>
        <strain>ATCC 11170 / ATH 1.1.1 / DSM 467 / LMG 4362 / NCIMB 8255 / S1</strain>
    </source>
</reference>
<accession>Q2RWE2</accession>
<comment type="function">
    <text evidence="1">Catalyzes the NADPH-dependent reduction of glutamyl-tRNA(Glu) to glutamate 1-semialdehyde (GSA).</text>
</comment>
<comment type="catalytic activity">
    <reaction evidence="1">
        <text>(S)-4-amino-5-oxopentanoate + tRNA(Glu) + NADP(+) = L-glutamyl-tRNA(Glu) + NADPH + H(+)</text>
        <dbReference type="Rhea" id="RHEA:12344"/>
        <dbReference type="Rhea" id="RHEA-COMP:9663"/>
        <dbReference type="Rhea" id="RHEA-COMP:9680"/>
        <dbReference type="ChEBI" id="CHEBI:15378"/>
        <dbReference type="ChEBI" id="CHEBI:57501"/>
        <dbReference type="ChEBI" id="CHEBI:57783"/>
        <dbReference type="ChEBI" id="CHEBI:58349"/>
        <dbReference type="ChEBI" id="CHEBI:78442"/>
        <dbReference type="ChEBI" id="CHEBI:78520"/>
        <dbReference type="EC" id="1.2.1.70"/>
    </reaction>
</comment>
<comment type="pathway">
    <text evidence="1">Porphyrin-containing compound metabolism; protoporphyrin-IX biosynthesis; 5-aminolevulinate from L-glutamyl-tRNA(Glu): step 1/2.</text>
</comment>
<comment type="pathway">
    <text evidence="1">Porphyrin-containing compound metabolism; chlorophyll biosynthesis.</text>
</comment>
<comment type="subunit">
    <text evidence="1">Homodimer.</text>
</comment>
<comment type="domain">
    <text evidence="1">Possesses an unusual extended V-shaped dimeric structure with each monomer consisting of three distinct domains arranged along a curved 'spinal' alpha-helix. The N-terminal catalytic domain specifically recognizes the glutamate moiety of the substrate. The second domain is the NADPH-binding domain, and the third C-terminal domain is responsible for dimerization.</text>
</comment>
<comment type="miscellaneous">
    <text evidence="1">During catalysis, the active site Cys acts as a nucleophile attacking the alpha-carbonyl group of tRNA-bound glutamate with the formation of a thioester intermediate between enzyme and glutamate, and the concomitant release of tRNA(Glu). The thioester intermediate is finally reduced by direct hydride transfer from NADPH, to form the product GSA.</text>
</comment>
<comment type="similarity">
    <text evidence="1">Belongs to the glutamyl-tRNA reductase family.</text>
</comment>
<comment type="sequence caution" evidence="2">
    <conflict type="erroneous initiation">
        <sequence resource="EMBL-CDS" id="ABC21553"/>
    </conflict>
</comment>
<protein>
    <recommendedName>
        <fullName evidence="1">Glutamyl-tRNA reductase</fullName>
        <shortName evidence="1">GluTR</shortName>
        <ecNumber evidence="1">1.2.1.70</ecNumber>
    </recommendedName>
</protein>
<organism>
    <name type="scientific">Rhodospirillum rubrum (strain ATCC 11170 / ATH 1.1.1 / DSM 467 / LMG 4362 / NCIMB 8255 / S1)</name>
    <dbReference type="NCBI Taxonomy" id="269796"/>
    <lineage>
        <taxon>Bacteria</taxon>
        <taxon>Pseudomonadati</taxon>
        <taxon>Pseudomonadota</taxon>
        <taxon>Alphaproteobacteria</taxon>
        <taxon>Rhodospirillales</taxon>
        <taxon>Rhodospirillaceae</taxon>
        <taxon>Rhodospirillum</taxon>
    </lineage>
</organism>
<proteinExistence type="inferred from homology"/>
<dbReference type="EC" id="1.2.1.70" evidence="1"/>
<dbReference type="EMBL" id="CP000230">
    <property type="protein sequence ID" value="ABC21553.1"/>
    <property type="status" value="ALT_INIT"/>
    <property type="molecule type" value="Genomic_DNA"/>
</dbReference>
<dbReference type="RefSeq" id="YP_425840.1">
    <property type="nucleotide sequence ID" value="NC_007643.1"/>
</dbReference>
<dbReference type="SMR" id="Q2RWE2"/>
<dbReference type="STRING" id="269796.Rru_A0749"/>
<dbReference type="EnsemblBacteria" id="ABC21553">
    <property type="protein sequence ID" value="ABC21553"/>
    <property type="gene ID" value="Rru_A0749"/>
</dbReference>
<dbReference type="KEGG" id="rru:Rru_A0749"/>
<dbReference type="PATRIC" id="fig|269796.9.peg.802"/>
<dbReference type="eggNOG" id="COG0373">
    <property type="taxonomic scope" value="Bacteria"/>
</dbReference>
<dbReference type="HOGENOM" id="CLU_035113_2_2_5"/>
<dbReference type="UniPathway" id="UPA00251">
    <property type="reaction ID" value="UER00316"/>
</dbReference>
<dbReference type="UniPathway" id="UPA00668"/>
<dbReference type="Proteomes" id="UP000001929">
    <property type="component" value="Chromosome"/>
</dbReference>
<dbReference type="GO" id="GO:0008883">
    <property type="term" value="F:glutamyl-tRNA reductase activity"/>
    <property type="evidence" value="ECO:0007669"/>
    <property type="project" value="UniProtKB-UniRule"/>
</dbReference>
<dbReference type="GO" id="GO:0050661">
    <property type="term" value="F:NADP binding"/>
    <property type="evidence" value="ECO:0007669"/>
    <property type="project" value="InterPro"/>
</dbReference>
<dbReference type="GO" id="GO:0015995">
    <property type="term" value="P:chlorophyll biosynthetic process"/>
    <property type="evidence" value="ECO:0007669"/>
    <property type="project" value="UniProtKB-UniRule"/>
</dbReference>
<dbReference type="GO" id="GO:0019353">
    <property type="term" value="P:protoporphyrinogen IX biosynthetic process from glutamate"/>
    <property type="evidence" value="ECO:0007669"/>
    <property type="project" value="TreeGrafter"/>
</dbReference>
<dbReference type="FunFam" id="3.30.460.30:FF:000001">
    <property type="entry name" value="Glutamyl-tRNA reductase"/>
    <property type="match status" value="1"/>
</dbReference>
<dbReference type="Gene3D" id="3.30.460.30">
    <property type="entry name" value="Glutamyl-tRNA reductase, N-terminal domain"/>
    <property type="match status" value="1"/>
</dbReference>
<dbReference type="Gene3D" id="3.40.50.720">
    <property type="entry name" value="NAD(P)-binding Rossmann-like Domain"/>
    <property type="match status" value="1"/>
</dbReference>
<dbReference type="HAMAP" id="MF_00087">
    <property type="entry name" value="Glu_tRNA_reductase"/>
    <property type="match status" value="1"/>
</dbReference>
<dbReference type="InterPro" id="IPR000343">
    <property type="entry name" value="4pyrrol_synth_GluRdtase"/>
</dbReference>
<dbReference type="InterPro" id="IPR015896">
    <property type="entry name" value="4pyrrol_synth_GluRdtase_dimer"/>
</dbReference>
<dbReference type="InterPro" id="IPR015895">
    <property type="entry name" value="4pyrrol_synth_GluRdtase_N"/>
</dbReference>
<dbReference type="InterPro" id="IPR036453">
    <property type="entry name" value="GluRdtase_dimer_dom_sf"/>
</dbReference>
<dbReference type="InterPro" id="IPR036343">
    <property type="entry name" value="GluRdtase_N_sf"/>
</dbReference>
<dbReference type="InterPro" id="IPR036291">
    <property type="entry name" value="NAD(P)-bd_dom_sf"/>
</dbReference>
<dbReference type="InterPro" id="IPR006151">
    <property type="entry name" value="Shikm_DH/Glu-tRNA_Rdtase"/>
</dbReference>
<dbReference type="NCBIfam" id="TIGR01035">
    <property type="entry name" value="hemA"/>
    <property type="match status" value="1"/>
</dbReference>
<dbReference type="PANTHER" id="PTHR43013">
    <property type="entry name" value="GLUTAMYL-TRNA REDUCTASE"/>
    <property type="match status" value="1"/>
</dbReference>
<dbReference type="PANTHER" id="PTHR43013:SF1">
    <property type="entry name" value="GLUTAMYL-TRNA REDUCTASE"/>
    <property type="match status" value="1"/>
</dbReference>
<dbReference type="Pfam" id="PF00745">
    <property type="entry name" value="GlutR_dimer"/>
    <property type="match status" value="1"/>
</dbReference>
<dbReference type="Pfam" id="PF05201">
    <property type="entry name" value="GlutR_N"/>
    <property type="match status" value="1"/>
</dbReference>
<dbReference type="Pfam" id="PF01488">
    <property type="entry name" value="Shikimate_DH"/>
    <property type="match status" value="1"/>
</dbReference>
<dbReference type="PIRSF" id="PIRSF000445">
    <property type="entry name" value="4pyrrol_synth_GluRdtase"/>
    <property type="match status" value="1"/>
</dbReference>
<dbReference type="SUPFAM" id="SSF69742">
    <property type="entry name" value="Glutamyl tRNA-reductase catalytic, N-terminal domain"/>
    <property type="match status" value="1"/>
</dbReference>
<dbReference type="SUPFAM" id="SSF69075">
    <property type="entry name" value="Glutamyl tRNA-reductase dimerization domain"/>
    <property type="match status" value="1"/>
</dbReference>
<dbReference type="SUPFAM" id="SSF51735">
    <property type="entry name" value="NAD(P)-binding Rossmann-fold domains"/>
    <property type="match status" value="1"/>
</dbReference>
<evidence type="ECO:0000255" key="1">
    <source>
        <dbReference type="HAMAP-Rule" id="MF_00087"/>
    </source>
</evidence>
<evidence type="ECO:0000305" key="2"/>
<gene>
    <name evidence="1" type="primary">hemA</name>
    <name type="ordered locus">Rru_A0749</name>
</gene>
<keyword id="KW-0149">Chlorophyll biosynthesis</keyword>
<keyword id="KW-0521">NADP</keyword>
<keyword id="KW-0560">Oxidoreductase</keyword>
<keyword id="KW-0627">Porphyrin biosynthesis</keyword>
<keyword id="KW-1185">Reference proteome</keyword>
<sequence>MDGYVMVGVNHQTTPMALRDRLVLDDPALAALLVRLRARGVTEALALSTCDRVEIFGHGGDPRALRALLLAELCAVGPIEPAALAGQMVDLRGLAVVAHMFRITSALESQVLGEPHILGQVKAAHRIARDAGTVGSATEALMQAAYAIAKRVRSETRISEGPVSLAAVAAQIARDLHGDLGETCLLLLGTQEMGELIAEQLQMAGVGRLVVCAPRRPRAEAVAARLGASVGDHGALLDLLPNADIVVVGVGGGLLALGEEAMRRTLKRRRNRPVFIVDAGVPGNVEPSVQRLEAAFLYDLADLEAVAEEGRAARDQASREAHALVADAVAAFERHRAERAAVPAIAALRAHFEGERLRALAEAPDDAEKATRLLVGRLLHGPSEALRDLAAGSADKEFMTVRAEMLLRRLFDLPTSIAETGATDREDGSKG</sequence>